<protein>
    <recommendedName>
        <fullName evidence="1">Phospho-N-acetylmuramoyl-pentapeptide-transferase</fullName>
        <ecNumber evidence="1">2.7.8.13</ecNumber>
    </recommendedName>
    <alternativeName>
        <fullName evidence="1">UDP-MurNAc-pentapeptide phosphotransferase</fullName>
    </alternativeName>
</protein>
<dbReference type="EC" id="2.7.8.13" evidence="1"/>
<dbReference type="EMBL" id="AM933173">
    <property type="protein sequence ID" value="CAR36033.1"/>
    <property type="molecule type" value="Genomic_DNA"/>
</dbReference>
<dbReference type="RefSeq" id="WP_000964141.1">
    <property type="nucleotide sequence ID" value="NC_011274.1"/>
</dbReference>
<dbReference type="SMR" id="B5RH61"/>
<dbReference type="KEGG" id="seg:SG0126"/>
<dbReference type="HOGENOM" id="CLU_023982_0_0_6"/>
<dbReference type="UniPathway" id="UPA00219"/>
<dbReference type="Proteomes" id="UP000008321">
    <property type="component" value="Chromosome"/>
</dbReference>
<dbReference type="GO" id="GO:0005886">
    <property type="term" value="C:plasma membrane"/>
    <property type="evidence" value="ECO:0007669"/>
    <property type="project" value="UniProtKB-SubCell"/>
</dbReference>
<dbReference type="GO" id="GO:0046872">
    <property type="term" value="F:metal ion binding"/>
    <property type="evidence" value="ECO:0007669"/>
    <property type="project" value="UniProtKB-KW"/>
</dbReference>
<dbReference type="GO" id="GO:0008963">
    <property type="term" value="F:phospho-N-acetylmuramoyl-pentapeptide-transferase activity"/>
    <property type="evidence" value="ECO:0007669"/>
    <property type="project" value="UniProtKB-UniRule"/>
</dbReference>
<dbReference type="GO" id="GO:0051992">
    <property type="term" value="F:UDP-N-acetylmuramoyl-L-alanyl-D-glutamyl-meso-2,6-diaminopimelyl-D-alanyl-D-alanine:undecaprenyl-phosphate transferase activity"/>
    <property type="evidence" value="ECO:0007669"/>
    <property type="project" value="RHEA"/>
</dbReference>
<dbReference type="GO" id="GO:0051301">
    <property type="term" value="P:cell division"/>
    <property type="evidence" value="ECO:0007669"/>
    <property type="project" value="UniProtKB-KW"/>
</dbReference>
<dbReference type="GO" id="GO:0071555">
    <property type="term" value="P:cell wall organization"/>
    <property type="evidence" value="ECO:0007669"/>
    <property type="project" value="UniProtKB-KW"/>
</dbReference>
<dbReference type="GO" id="GO:0009252">
    <property type="term" value="P:peptidoglycan biosynthetic process"/>
    <property type="evidence" value="ECO:0007669"/>
    <property type="project" value="UniProtKB-UniRule"/>
</dbReference>
<dbReference type="GO" id="GO:0008360">
    <property type="term" value="P:regulation of cell shape"/>
    <property type="evidence" value="ECO:0007669"/>
    <property type="project" value="UniProtKB-KW"/>
</dbReference>
<dbReference type="CDD" id="cd06852">
    <property type="entry name" value="GT_MraY"/>
    <property type="match status" value="1"/>
</dbReference>
<dbReference type="HAMAP" id="MF_00038">
    <property type="entry name" value="MraY"/>
    <property type="match status" value="1"/>
</dbReference>
<dbReference type="InterPro" id="IPR000715">
    <property type="entry name" value="Glycosyl_transferase_4"/>
</dbReference>
<dbReference type="InterPro" id="IPR003524">
    <property type="entry name" value="PNAcMuramoyl-5peptid_Trfase"/>
</dbReference>
<dbReference type="InterPro" id="IPR018480">
    <property type="entry name" value="PNAcMuramoyl-5peptid_Trfase_CS"/>
</dbReference>
<dbReference type="NCBIfam" id="TIGR00445">
    <property type="entry name" value="mraY"/>
    <property type="match status" value="1"/>
</dbReference>
<dbReference type="PANTHER" id="PTHR22926">
    <property type="entry name" value="PHOSPHO-N-ACETYLMURAMOYL-PENTAPEPTIDE-TRANSFERASE"/>
    <property type="match status" value="1"/>
</dbReference>
<dbReference type="PANTHER" id="PTHR22926:SF5">
    <property type="entry name" value="PHOSPHO-N-ACETYLMURAMOYL-PENTAPEPTIDE-TRANSFERASE HOMOLOG"/>
    <property type="match status" value="1"/>
</dbReference>
<dbReference type="Pfam" id="PF00953">
    <property type="entry name" value="Glycos_transf_4"/>
    <property type="match status" value="1"/>
</dbReference>
<dbReference type="Pfam" id="PF10555">
    <property type="entry name" value="MraY_sig1"/>
    <property type="match status" value="1"/>
</dbReference>
<dbReference type="PROSITE" id="PS01347">
    <property type="entry name" value="MRAY_1"/>
    <property type="match status" value="1"/>
</dbReference>
<dbReference type="PROSITE" id="PS01348">
    <property type="entry name" value="MRAY_2"/>
    <property type="match status" value="1"/>
</dbReference>
<organism>
    <name type="scientific">Salmonella gallinarum (strain 287/91 / NCTC 13346)</name>
    <dbReference type="NCBI Taxonomy" id="550538"/>
    <lineage>
        <taxon>Bacteria</taxon>
        <taxon>Pseudomonadati</taxon>
        <taxon>Pseudomonadota</taxon>
        <taxon>Gammaproteobacteria</taxon>
        <taxon>Enterobacterales</taxon>
        <taxon>Enterobacteriaceae</taxon>
        <taxon>Salmonella</taxon>
    </lineage>
</organism>
<evidence type="ECO:0000255" key="1">
    <source>
        <dbReference type="HAMAP-Rule" id="MF_00038"/>
    </source>
</evidence>
<name>MRAY_SALG2</name>
<proteinExistence type="inferred from homology"/>
<sequence>MLVWLAEHLVKYYSGFNVFSYLTFRAIVSLLTALFISLWMGPRMIARLQKLSFGQVVRNDGPESHFSKRGTPTMGGIMILTSIVISVLLWAYPSNPYVWCVLVVLIGYGIIGFVDDYRKVVRKDTKGLIARWKYFWMSVIALGVAFALYLVGKDTPATQLVVPFFKDVMPQLGLFYILLSYFVIVGTGNAVNLTDGLDGLAIMPTVFVAAGFALVAWATGNMNFANYLHIPYLRHAGELVIVCTAIVGAGLGFLWFNTYPAQVFMGDVGSLALGGALGIIAVLLRQEFLLVIMGGVFVVETLSVILQVGSFKLRGQRIFRMAPIHHHYELKGWPEPRVIVRFWIISLMLVLIGLATLKVR</sequence>
<accession>B5RH61</accession>
<reference key="1">
    <citation type="journal article" date="2008" name="Genome Res.">
        <title>Comparative genome analysis of Salmonella enteritidis PT4 and Salmonella gallinarum 287/91 provides insights into evolutionary and host adaptation pathways.</title>
        <authorList>
            <person name="Thomson N.R."/>
            <person name="Clayton D.J."/>
            <person name="Windhorst D."/>
            <person name="Vernikos G."/>
            <person name="Davidson S."/>
            <person name="Churcher C."/>
            <person name="Quail M.A."/>
            <person name="Stevens M."/>
            <person name="Jones M.A."/>
            <person name="Watson M."/>
            <person name="Barron A."/>
            <person name="Layton A."/>
            <person name="Pickard D."/>
            <person name="Kingsley R.A."/>
            <person name="Bignell A."/>
            <person name="Clark L."/>
            <person name="Harris B."/>
            <person name="Ormond D."/>
            <person name="Abdellah Z."/>
            <person name="Brooks K."/>
            <person name="Cherevach I."/>
            <person name="Chillingworth T."/>
            <person name="Woodward J."/>
            <person name="Norberczak H."/>
            <person name="Lord A."/>
            <person name="Arrowsmith C."/>
            <person name="Jagels K."/>
            <person name="Moule S."/>
            <person name="Mungall K."/>
            <person name="Saunders M."/>
            <person name="Whitehead S."/>
            <person name="Chabalgoity J.A."/>
            <person name="Maskell D."/>
            <person name="Humphreys T."/>
            <person name="Roberts M."/>
            <person name="Barrow P.A."/>
            <person name="Dougan G."/>
            <person name="Parkhill J."/>
        </authorList>
    </citation>
    <scope>NUCLEOTIDE SEQUENCE [LARGE SCALE GENOMIC DNA]</scope>
    <source>
        <strain>287/91 / NCTC 13346</strain>
    </source>
</reference>
<gene>
    <name evidence="1" type="primary">mraY</name>
    <name type="ordered locus">SG0126</name>
</gene>
<feature type="chain" id="PRO_1000090667" description="Phospho-N-acetylmuramoyl-pentapeptide-transferase">
    <location>
        <begin position="1"/>
        <end position="360"/>
    </location>
</feature>
<feature type="topological domain" description="Periplasmic" evidence="1">
    <location>
        <begin position="1"/>
        <end position="25"/>
    </location>
</feature>
<feature type="transmembrane region" description="Helical" evidence="1">
    <location>
        <begin position="26"/>
        <end position="46"/>
    </location>
</feature>
<feature type="topological domain" description="Cytoplasmic" evidence="1">
    <location>
        <begin position="47"/>
        <end position="71"/>
    </location>
</feature>
<feature type="transmembrane region" description="Helical" evidence="1">
    <location>
        <begin position="72"/>
        <end position="92"/>
    </location>
</feature>
<feature type="topological domain" description="Periplasmic" evidence="1">
    <location>
        <position position="93"/>
    </location>
</feature>
<feature type="transmembrane region" description="Helical" evidence="1">
    <location>
        <begin position="94"/>
        <end position="114"/>
    </location>
</feature>
<feature type="topological domain" description="Cytoplasmic" evidence="1">
    <location>
        <begin position="115"/>
        <end position="131"/>
    </location>
</feature>
<feature type="transmembrane region" description="Helical" evidence="1">
    <location>
        <begin position="132"/>
        <end position="152"/>
    </location>
</feature>
<feature type="topological domain" description="Periplasmic" evidence="1">
    <location>
        <begin position="153"/>
        <end position="167"/>
    </location>
</feature>
<feature type="transmembrane region" description="Helical" evidence="1">
    <location>
        <begin position="168"/>
        <end position="188"/>
    </location>
</feature>
<feature type="topological domain" description="Cytoplasmic" evidence="1">
    <location>
        <begin position="189"/>
        <end position="198"/>
    </location>
</feature>
<feature type="transmembrane region" description="Helical" evidence="1">
    <location>
        <begin position="199"/>
        <end position="219"/>
    </location>
</feature>
<feature type="topological domain" description="Periplasmic" evidence="1">
    <location>
        <begin position="220"/>
        <end position="235"/>
    </location>
</feature>
<feature type="transmembrane region" description="Helical" evidence="1">
    <location>
        <begin position="236"/>
        <end position="256"/>
    </location>
</feature>
<feature type="topological domain" description="Cytoplasmic" evidence="1">
    <location>
        <begin position="257"/>
        <end position="262"/>
    </location>
</feature>
<feature type="transmembrane region" description="Helical" evidence="1">
    <location>
        <begin position="263"/>
        <end position="283"/>
    </location>
</feature>
<feature type="topological domain" description="Periplasmic" evidence="1">
    <location>
        <begin position="284"/>
        <end position="287"/>
    </location>
</feature>
<feature type="transmembrane region" description="Helical" evidence="1">
    <location>
        <begin position="288"/>
        <end position="308"/>
    </location>
</feature>
<feature type="topological domain" description="Cytoplasmic" evidence="1">
    <location>
        <begin position="309"/>
        <end position="337"/>
    </location>
</feature>
<feature type="transmembrane region" description="Helical" evidence="1">
    <location>
        <begin position="338"/>
        <end position="358"/>
    </location>
</feature>
<feature type="topological domain" description="Periplasmic" evidence="1">
    <location>
        <begin position="359"/>
        <end position="360"/>
    </location>
</feature>
<comment type="function">
    <text evidence="1">Catalyzes the initial step of the lipid cycle reactions in the biosynthesis of the cell wall peptidoglycan: transfers peptidoglycan precursor phospho-MurNAc-pentapeptide from UDP-MurNAc-pentapeptide onto the lipid carrier undecaprenyl phosphate, yielding undecaprenyl-pyrophosphoryl-MurNAc-pentapeptide, known as lipid I.</text>
</comment>
<comment type="catalytic activity">
    <reaction evidence="1">
        <text>UDP-N-acetyl-alpha-D-muramoyl-L-alanyl-gamma-D-glutamyl-meso-2,6-diaminopimeloyl-D-alanyl-D-alanine + di-trans,octa-cis-undecaprenyl phosphate = di-trans,octa-cis-undecaprenyl diphospho-N-acetyl-alpha-D-muramoyl-L-alanyl-D-glutamyl-meso-2,6-diaminopimeloyl-D-alanyl-D-alanine + UMP</text>
        <dbReference type="Rhea" id="RHEA:28386"/>
        <dbReference type="ChEBI" id="CHEBI:57865"/>
        <dbReference type="ChEBI" id="CHEBI:60392"/>
        <dbReference type="ChEBI" id="CHEBI:61386"/>
        <dbReference type="ChEBI" id="CHEBI:61387"/>
        <dbReference type="EC" id="2.7.8.13"/>
    </reaction>
</comment>
<comment type="cofactor">
    <cofactor evidence="1">
        <name>Mg(2+)</name>
        <dbReference type="ChEBI" id="CHEBI:18420"/>
    </cofactor>
</comment>
<comment type="pathway">
    <text evidence="1">Cell wall biogenesis; peptidoglycan biosynthesis.</text>
</comment>
<comment type="subcellular location">
    <subcellularLocation>
        <location evidence="1">Cell inner membrane</location>
        <topology evidence="1">Multi-pass membrane protein</topology>
    </subcellularLocation>
</comment>
<comment type="similarity">
    <text evidence="1">Belongs to the glycosyltransferase 4 family. MraY subfamily.</text>
</comment>
<keyword id="KW-0131">Cell cycle</keyword>
<keyword id="KW-0132">Cell division</keyword>
<keyword id="KW-0997">Cell inner membrane</keyword>
<keyword id="KW-1003">Cell membrane</keyword>
<keyword id="KW-0133">Cell shape</keyword>
<keyword id="KW-0961">Cell wall biogenesis/degradation</keyword>
<keyword id="KW-0460">Magnesium</keyword>
<keyword id="KW-0472">Membrane</keyword>
<keyword id="KW-0479">Metal-binding</keyword>
<keyword id="KW-0573">Peptidoglycan synthesis</keyword>
<keyword id="KW-0808">Transferase</keyword>
<keyword id="KW-0812">Transmembrane</keyword>
<keyword id="KW-1133">Transmembrane helix</keyword>